<feature type="signal peptide" evidence="1">
    <location>
        <begin position="1"/>
        <end position="18"/>
    </location>
</feature>
<feature type="propeptide" id="PRO_0000021492" evidence="1 8">
    <location>
        <begin position="19"/>
        <end position="23"/>
    </location>
</feature>
<feature type="peptide" id="PRO_0000021493" description="Bomanin Short 3">
    <location>
        <begin position="24"/>
        <end position="39"/>
    </location>
</feature>
<feature type="disulfide bond" evidence="8">
    <location>
        <begin position="32"/>
        <end position="35"/>
    </location>
</feature>
<accession>Q9V8G0</accession>
<gene>
    <name evidence="9" type="primary">BomS3</name>
    <name evidence="6" type="synonym">Bom3</name>
    <name evidence="9" type="synonym">IM3</name>
    <name evidence="9" type="ORF">CG16844</name>
</gene>
<reference evidence="8" key="1">
    <citation type="journal article" date="2000" name="Science">
        <title>The genome sequence of Drosophila melanogaster.</title>
        <authorList>
            <person name="Adams M.D."/>
            <person name="Celniker S.E."/>
            <person name="Holt R.A."/>
            <person name="Evans C.A."/>
            <person name="Gocayne J.D."/>
            <person name="Amanatides P.G."/>
            <person name="Scherer S.E."/>
            <person name="Li P.W."/>
            <person name="Hoskins R.A."/>
            <person name="Galle R.F."/>
            <person name="George R.A."/>
            <person name="Lewis S.E."/>
            <person name="Richards S."/>
            <person name="Ashburner M."/>
            <person name="Henderson S.N."/>
            <person name="Sutton G.G."/>
            <person name="Wortman J.R."/>
            <person name="Yandell M.D."/>
            <person name="Zhang Q."/>
            <person name="Chen L.X."/>
            <person name="Brandon R.C."/>
            <person name="Rogers Y.-H.C."/>
            <person name="Blazej R.G."/>
            <person name="Champe M."/>
            <person name="Pfeiffer B.D."/>
            <person name="Wan K.H."/>
            <person name="Doyle C."/>
            <person name="Baxter E.G."/>
            <person name="Helt G."/>
            <person name="Nelson C.R."/>
            <person name="Miklos G.L.G."/>
            <person name="Abril J.F."/>
            <person name="Agbayani A."/>
            <person name="An H.-J."/>
            <person name="Andrews-Pfannkoch C."/>
            <person name="Baldwin D."/>
            <person name="Ballew R.M."/>
            <person name="Basu A."/>
            <person name="Baxendale J."/>
            <person name="Bayraktaroglu L."/>
            <person name="Beasley E.M."/>
            <person name="Beeson K.Y."/>
            <person name="Benos P.V."/>
            <person name="Berman B.P."/>
            <person name="Bhandari D."/>
            <person name="Bolshakov S."/>
            <person name="Borkova D."/>
            <person name="Botchan M.R."/>
            <person name="Bouck J."/>
            <person name="Brokstein P."/>
            <person name="Brottier P."/>
            <person name="Burtis K.C."/>
            <person name="Busam D.A."/>
            <person name="Butler H."/>
            <person name="Cadieu E."/>
            <person name="Center A."/>
            <person name="Chandra I."/>
            <person name="Cherry J.M."/>
            <person name="Cawley S."/>
            <person name="Dahlke C."/>
            <person name="Davenport L.B."/>
            <person name="Davies P."/>
            <person name="de Pablos B."/>
            <person name="Delcher A."/>
            <person name="Deng Z."/>
            <person name="Mays A.D."/>
            <person name="Dew I."/>
            <person name="Dietz S.M."/>
            <person name="Dodson K."/>
            <person name="Doup L.E."/>
            <person name="Downes M."/>
            <person name="Dugan-Rocha S."/>
            <person name="Dunkov B.C."/>
            <person name="Dunn P."/>
            <person name="Durbin K.J."/>
            <person name="Evangelista C.C."/>
            <person name="Ferraz C."/>
            <person name="Ferriera S."/>
            <person name="Fleischmann W."/>
            <person name="Fosler C."/>
            <person name="Gabrielian A.E."/>
            <person name="Garg N.S."/>
            <person name="Gelbart W.M."/>
            <person name="Glasser K."/>
            <person name="Glodek A."/>
            <person name="Gong F."/>
            <person name="Gorrell J.H."/>
            <person name="Gu Z."/>
            <person name="Guan P."/>
            <person name="Harris M."/>
            <person name="Harris N.L."/>
            <person name="Harvey D.A."/>
            <person name="Heiman T.J."/>
            <person name="Hernandez J.R."/>
            <person name="Houck J."/>
            <person name="Hostin D."/>
            <person name="Houston K.A."/>
            <person name="Howland T.J."/>
            <person name="Wei M.-H."/>
            <person name="Ibegwam C."/>
            <person name="Jalali M."/>
            <person name="Kalush F."/>
            <person name="Karpen G.H."/>
            <person name="Ke Z."/>
            <person name="Kennison J.A."/>
            <person name="Ketchum K.A."/>
            <person name="Kimmel B.E."/>
            <person name="Kodira C.D."/>
            <person name="Kraft C.L."/>
            <person name="Kravitz S."/>
            <person name="Kulp D."/>
            <person name="Lai Z."/>
            <person name="Lasko P."/>
            <person name="Lei Y."/>
            <person name="Levitsky A.A."/>
            <person name="Li J.H."/>
            <person name="Li Z."/>
            <person name="Liang Y."/>
            <person name="Lin X."/>
            <person name="Liu X."/>
            <person name="Mattei B."/>
            <person name="McIntosh T.C."/>
            <person name="McLeod M.P."/>
            <person name="McPherson D."/>
            <person name="Merkulov G."/>
            <person name="Milshina N.V."/>
            <person name="Mobarry C."/>
            <person name="Morris J."/>
            <person name="Moshrefi A."/>
            <person name="Mount S.M."/>
            <person name="Moy M."/>
            <person name="Murphy B."/>
            <person name="Murphy L."/>
            <person name="Muzny D.M."/>
            <person name="Nelson D.L."/>
            <person name="Nelson D.R."/>
            <person name="Nelson K.A."/>
            <person name="Nixon K."/>
            <person name="Nusskern D.R."/>
            <person name="Pacleb J.M."/>
            <person name="Palazzolo M."/>
            <person name="Pittman G.S."/>
            <person name="Pan S."/>
            <person name="Pollard J."/>
            <person name="Puri V."/>
            <person name="Reese M.G."/>
            <person name="Reinert K."/>
            <person name="Remington K."/>
            <person name="Saunders R.D.C."/>
            <person name="Scheeler F."/>
            <person name="Shen H."/>
            <person name="Shue B.C."/>
            <person name="Siden-Kiamos I."/>
            <person name="Simpson M."/>
            <person name="Skupski M.P."/>
            <person name="Smith T.J."/>
            <person name="Spier E."/>
            <person name="Spradling A.C."/>
            <person name="Stapleton M."/>
            <person name="Strong R."/>
            <person name="Sun E."/>
            <person name="Svirskas R."/>
            <person name="Tector C."/>
            <person name="Turner R."/>
            <person name="Venter E."/>
            <person name="Wang A.H."/>
            <person name="Wang X."/>
            <person name="Wang Z.-Y."/>
            <person name="Wassarman D.A."/>
            <person name="Weinstock G.M."/>
            <person name="Weissenbach J."/>
            <person name="Williams S.M."/>
            <person name="Woodage T."/>
            <person name="Worley K.C."/>
            <person name="Wu D."/>
            <person name="Yang S."/>
            <person name="Yao Q.A."/>
            <person name="Ye J."/>
            <person name="Yeh R.-F."/>
            <person name="Zaveri J.S."/>
            <person name="Zhan M."/>
            <person name="Zhang G."/>
            <person name="Zhao Q."/>
            <person name="Zheng L."/>
            <person name="Zheng X.H."/>
            <person name="Zhong F.N."/>
            <person name="Zhong W."/>
            <person name="Zhou X."/>
            <person name="Zhu S.C."/>
            <person name="Zhu X."/>
            <person name="Smith H.O."/>
            <person name="Gibbs R.A."/>
            <person name="Myers E.W."/>
            <person name="Rubin G.M."/>
            <person name="Venter J.C."/>
        </authorList>
    </citation>
    <scope>NUCLEOTIDE SEQUENCE [LARGE SCALE GENOMIC DNA]</scope>
    <source>
        <strain evidence="2">Berkeley</strain>
    </source>
</reference>
<reference key="2">
    <citation type="journal article" date="2002" name="Genome Biol.">
        <title>Annotation of the Drosophila melanogaster euchromatic genome: a systematic review.</title>
        <authorList>
            <person name="Misra S."/>
            <person name="Crosby M.A."/>
            <person name="Mungall C.J."/>
            <person name="Matthews B.B."/>
            <person name="Campbell K.S."/>
            <person name="Hradecky P."/>
            <person name="Huang Y."/>
            <person name="Kaminker J.S."/>
            <person name="Millburn G.H."/>
            <person name="Prochnik S.E."/>
            <person name="Smith C.D."/>
            <person name="Tupy J.L."/>
            <person name="Whitfield E.J."/>
            <person name="Bayraktaroglu L."/>
            <person name="Berman B.P."/>
            <person name="Bettencourt B.R."/>
            <person name="Celniker S.E."/>
            <person name="de Grey A.D.N.J."/>
            <person name="Drysdale R.A."/>
            <person name="Harris N.L."/>
            <person name="Richter J."/>
            <person name="Russo S."/>
            <person name="Schroeder A.J."/>
            <person name="Shu S.Q."/>
            <person name="Stapleton M."/>
            <person name="Yamada C."/>
            <person name="Ashburner M."/>
            <person name="Gelbart W.M."/>
            <person name="Rubin G.M."/>
            <person name="Lewis S.E."/>
        </authorList>
    </citation>
    <scope>GENOME REANNOTATION</scope>
    <source>
        <strain>Berkeley</strain>
    </source>
</reference>
<reference evidence="8" key="3">
    <citation type="submission" date="2002-07" db="UniProtKB">
        <authorList>
            <person name="Bulet P."/>
            <person name="Charlet M."/>
            <person name="Ehret-Sabatier L."/>
        </authorList>
    </citation>
    <scope>PROTEIN SEQUENCE OF 24-39</scope>
    <scope>IDENTIFICATION BY MASS SPECTROMETRY</scope>
    <source>
        <strain evidence="8">Oregon-R</strain>
        <tissue evidence="8">Hemolymph</tissue>
    </source>
</reference>
<reference evidence="8" key="4">
    <citation type="journal article" date="1998" name="Proc. Natl. Acad. Sci. U.S.A.">
        <title>Differential display of peptides induced during the immune response of Drosophila: a matrix-assisted laser desorption ionization time-of-flight mass spectrometry study.</title>
        <authorList>
            <person name="Uttenweiler-Joseph S."/>
            <person name="Moniatte M."/>
            <person name="Lagueux M."/>
            <person name="van Dorsselaer A."/>
            <person name="Hoffmann J.A."/>
            <person name="Bulet P."/>
        </authorList>
    </citation>
    <scope>SUBCELLULAR LOCATION</scope>
    <scope>TISSUE SPECIFICITY</scope>
    <scope>INDUCTION BY BACTERIA</scope>
    <scope>MASS SPECTROMETRY</scope>
    <source>
        <strain evidence="7">Oregon-R</strain>
        <tissue evidence="7">Hemolymph</tissue>
    </source>
</reference>
<reference key="5">
    <citation type="journal article" date="2015" name="PLoS Pathog.">
        <title>An effector Peptide family required for Drosophila toll-mediated immunity.</title>
        <authorList>
            <person name="Clemmons A.W."/>
            <person name="Lindsay S.A."/>
            <person name="Wasserman S.A."/>
        </authorList>
    </citation>
    <scope>FUNCTION</scope>
</reference>
<reference key="6">
    <citation type="journal article" date="2018" name="J. Innate Immun.">
        <title>Short-Form Bomanins Mediate Humoral Immunity in Drosophila.</title>
        <authorList>
            <person name="Lindsay S.A."/>
            <person name="Lin S.J.H."/>
            <person name="Wasserman S.A."/>
        </authorList>
    </citation>
    <scope>FUNCTION</scope>
    <scope>SUBCELLULAR LOCATION</scope>
    <scope>TISSUE SPECIFICITY</scope>
    <scope>INDUCTION BY BACTERIA</scope>
</reference>
<organism evidence="8">
    <name type="scientific">Drosophila melanogaster</name>
    <name type="common">Fruit fly</name>
    <dbReference type="NCBI Taxonomy" id="7227"/>
    <lineage>
        <taxon>Eukaryota</taxon>
        <taxon>Metazoa</taxon>
        <taxon>Ecdysozoa</taxon>
        <taxon>Arthropoda</taxon>
        <taxon>Hexapoda</taxon>
        <taxon>Insecta</taxon>
        <taxon>Pterygota</taxon>
        <taxon>Neoptera</taxon>
        <taxon>Endopterygota</taxon>
        <taxon>Diptera</taxon>
        <taxon>Brachycera</taxon>
        <taxon>Muscomorpha</taxon>
        <taxon>Ephydroidea</taxon>
        <taxon>Drosophilidae</taxon>
        <taxon>Drosophila</taxon>
        <taxon>Sophophora</taxon>
    </lineage>
</organism>
<evidence type="ECO:0000255" key="1"/>
<evidence type="ECO:0000269" key="2">
    <source>
    </source>
</evidence>
<evidence type="ECO:0000269" key="3">
    <source>
    </source>
</evidence>
<evidence type="ECO:0000269" key="4">
    <source>
    </source>
</evidence>
<evidence type="ECO:0000269" key="5">
    <source>
    </source>
</evidence>
<evidence type="ECO:0000303" key="6">
    <source>
    </source>
</evidence>
<evidence type="ECO:0000303" key="7">
    <source>
    </source>
</evidence>
<evidence type="ECO:0000305" key="8"/>
<evidence type="ECO:0000312" key="9">
    <source>
        <dbReference type="FlyBase" id="FBgn0040736"/>
    </source>
</evidence>
<keyword id="KW-0903">Direct protein sequencing</keyword>
<keyword id="KW-1015">Disulfide bond</keyword>
<keyword id="KW-0391">Immunity</keyword>
<keyword id="KW-0399">Innate immunity</keyword>
<keyword id="KW-1185">Reference proteome</keyword>
<keyword id="KW-0964">Secreted</keyword>
<keyword id="KW-0732">Signal</keyword>
<dbReference type="EMBL" id="AE013599">
    <property type="protein sequence ID" value="AAF57707.1"/>
    <property type="molecule type" value="Genomic_DNA"/>
</dbReference>
<dbReference type="RefSeq" id="NP_001286569.1">
    <property type="nucleotide sequence ID" value="NM_001299640.1"/>
</dbReference>
<dbReference type="RefSeq" id="NP_652368.1">
    <property type="nucleotide sequence ID" value="NM_144111.3"/>
</dbReference>
<dbReference type="BioGRID" id="72591">
    <property type="interactions" value="4"/>
</dbReference>
<dbReference type="FunCoup" id="Q9V8G0">
    <property type="interactions" value="120"/>
</dbReference>
<dbReference type="IntAct" id="Q9V8G0">
    <property type="interactions" value="2"/>
</dbReference>
<dbReference type="STRING" id="7227.FBpp0309289"/>
<dbReference type="PaxDb" id="7227-FBpp0085846"/>
<dbReference type="DNASU" id="50209"/>
<dbReference type="EnsemblMetazoa" id="FBtr0086665">
    <property type="protein sequence ID" value="FBpp0085846"/>
    <property type="gene ID" value="FBgn0040736"/>
</dbReference>
<dbReference type="EnsemblMetazoa" id="FBtr0340328">
    <property type="protein sequence ID" value="FBpp0309289"/>
    <property type="gene ID" value="FBgn0040736"/>
</dbReference>
<dbReference type="GeneID" id="50209"/>
<dbReference type="KEGG" id="dme:Dmel_CG16844"/>
<dbReference type="AGR" id="FB:FBgn0040736"/>
<dbReference type="CTD" id="50209"/>
<dbReference type="FlyBase" id="FBgn0040736">
    <property type="gene designation" value="BomS3"/>
</dbReference>
<dbReference type="VEuPathDB" id="VectorBase:FBgn0040736"/>
<dbReference type="HOGENOM" id="CLU_204809_0_0_1"/>
<dbReference type="InParanoid" id="Q9V8G0"/>
<dbReference type="BioGRID-ORCS" id="50209">
    <property type="hits" value="0 hits in 1 CRISPR screen"/>
</dbReference>
<dbReference type="GenomeRNAi" id="50209"/>
<dbReference type="PRO" id="PR:Q9V8G0"/>
<dbReference type="Proteomes" id="UP000000803">
    <property type="component" value="Chromosome 2R"/>
</dbReference>
<dbReference type="Bgee" id="FBgn0040736">
    <property type="expression patterns" value="Expressed in capitellum (Drosophila) and 159 other cell types or tissues"/>
</dbReference>
<dbReference type="ExpressionAtlas" id="Q9V8G0">
    <property type="expression patterns" value="baseline and differential"/>
</dbReference>
<dbReference type="GO" id="GO:0005576">
    <property type="term" value="C:extracellular region"/>
    <property type="evidence" value="ECO:0000314"/>
    <property type="project" value="UniProtKB"/>
</dbReference>
<dbReference type="GO" id="GO:0019731">
    <property type="term" value="P:antibacterial humoral response"/>
    <property type="evidence" value="ECO:0000314"/>
    <property type="project" value="UniProtKB"/>
</dbReference>
<dbReference type="GO" id="GO:0050830">
    <property type="term" value="P:defense response to Gram-positive bacterium"/>
    <property type="evidence" value="ECO:0000270"/>
    <property type="project" value="FlyBase"/>
</dbReference>
<dbReference type="GO" id="GO:0045087">
    <property type="term" value="P:innate immune response"/>
    <property type="evidence" value="ECO:0007669"/>
    <property type="project" value="UniProtKB-KW"/>
</dbReference>
<dbReference type="GO" id="GO:0009617">
    <property type="term" value="P:response to bacterium"/>
    <property type="evidence" value="ECO:0007007"/>
    <property type="project" value="FlyBase"/>
</dbReference>
<dbReference type="GO" id="GO:0010046">
    <property type="term" value="P:response to mycotoxin"/>
    <property type="evidence" value="ECO:0000270"/>
    <property type="project" value="FlyBase"/>
</dbReference>
<dbReference type="InterPro" id="IPR013172">
    <property type="entry name" value="Bomanin"/>
</dbReference>
<dbReference type="Pfam" id="PF08194">
    <property type="entry name" value="DIM"/>
    <property type="match status" value="1"/>
</dbReference>
<proteinExistence type="evidence at protein level"/>
<name>BM03_DROME</name>
<protein>
    <recommendedName>
        <fullName evidence="9">Bomanin Short 3</fullName>
    </recommendedName>
    <alternativeName>
        <fullName evidence="6">Bomanin-3</fullName>
    </alternativeName>
    <alternativeName>
        <fullName evidence="9">Immune-induced peptide 3</fullName>
        <shortName evidence="9">DIM-3</shortName>
        <shortName evidence="7">DIM3</shortName>
    </alternativeName>
</protein>
<sequence length="39" mass="4100">MKFLSLAFVLGLLALANATPLNPGNVIINGDCRVCNVRA</sequence>
<comment type="function">
    <text evidence="3 4">Secreted immune-induced peptide induced by Toll signaling (PubMed:29920489). Has a role in resistance bacterial and fungal infections (PubMed:25915418, PubMed:29920489). The strength of antimicrobial activity appears to correlate with the overall level of expression (PubMed:29920489). Has no activity against the fungus C.glabrata in vitro (PubMed:29920489).</text>
</comment>
<comment type="subcellular location">
    <subcellularLocation>
        <location evidence="4 5">Secreted</location>
    </subcellularLocation>
</comment>
<comment type="tissue specificity">
    <text evidence="4 5">Hemolymph (at protein level).</text>
</comment>
<comment type="induction">
    <text evidence="4 5">By bacterial infection (at protein level) (PubMed:29920489, PubMed:9736738). Detected within 24 hours of infection (PubMed:9736738).</text>
</comment>
<comment type="mass spectrometry" mass="1701.71" method="MALDI" evidence="5 8"/>
<comment type="miscellaneous">
    <text evidence="5">Not induced after bacterial challenge in strains carrying a loss-of-function mutation for Toll. Constitutively expressed in Toll gain-of-function mutants.</text>
</comment>
<comment type="similarity">
    <text evidence="8">Belongs to the bomanin family.</text>
</comment>